<proteinExistence type="evidence at transcript level"/>
<dbReference type="EMBL" id="L37781">
    <property type="protein sequence ID" value="AAA65677.1"/>
    <property type="molecule type" value="mRNA"/>
</dbReference>
<dbReference type="SMR" id="P47965"/>
<dbReference type="GlyCosmos" id="P47965">
    <property type="glycosylation" value="1 site, No reported glycans"/>
</dbReference>
<dbReference type="Ensembl" id="ENSMUGT00000028009">
    <property type="protein sequence ID" value="ENSMUGP00000024422"/>
    <property type="gene ID" value="ENSMUGG00000020404"/>
</dbReference>
<dbReference type="OrthoDB" id="9931894at2759"/>
<dbReference type="GO" id="GO:0005615">
    <property type="term" value="C:extracellular space"/>
    <property type="evidence" value="ECO:0000250"/>
    <property type="project" value="UniProtKB"/>
</dbReference>
<dbReference type="GO" id="GO:0005125">
    <property type="term" value="F:cytokine activity"/>
    <property type="evidence" value="ECO:0007669"/>
    <property type="project" value="UniProtKB-KW"/>
</dbReference>
<dbReference type="GO" id="GO:0006955">
    <property type="term" value="P:immune response"/>
    <property type="evidence" value="ECO:0007669"/>
    <property type="project" value="InterPro"/>
</dbReference>
<dbReference type="GO" id="GO:0030889">
    <property type="term" value="P:negative regulation of B cell proliferation"/>
    <property type="evidence" value="ECO:0000250"/>
    <property type="project" value="UniProtKB"/>
</dbReference>
<dbReference type="GO" id="GO:0002719">
    <property type="term" value="P:negative regulation of cytokine production involved in immune response"/>
    <property type="evidence" value="ECO:0000250"/>
    <property type="project" value="UniProtKB"/>
</dbReference>
<dbReference type="GO" id="GO:0050728">
    <property type="term" value="P:negative regulation of inflammatory response"/>
    <property type="evidence" value="ECO:0000250"/>
    <property type="project" value="UniProtKB"/>
</dbReference>
<dbReference type="GO" id="GO:0032715">
    <property type="term" value="P:negative regulation of interleukin-6 production"/>
    <property type="evidence" value="ECO:0000250"/>
    <property type="project" value="UniProtKB"/>
</dbReference>
<dbReference type="GO" id="GO:0051045">
    <property type="term" value="P:negative regulation of membrane protein ectodomain proteolysis"/>
    <property type="evidence" value="ECO:0000250"/>
    <property type="project" value="UniProtKB"/>
</dbReference>
<dbReference type="GO" id="GO:0002904">
    <property type="term" value="P:positive regulation of B cell apoptotic process"/>
    <property type="evidence" value="ECO:0000250"/>
    <property type="project" value="UniProtKB"/>
</dbReference>
<dbReference type="GO" id="GO:0001819">
    <property type="term" value="P:positive regulation of cytokine production"/>
    <property type="evidence" value="ECO:0000250"/>
    <property type="project" value="UniProtKB"/>
</dbReference>
<dbReference type="GO" id="GO:0051091">
    <property type="term" value="P:positive regulation of DNA-binding transcription factor activity"/>
    <property type="evidence" value="ECO:0000250"/>
    <property type="project" value="UniProtKB"/>
</dbReference>
<dbReference type="GO" id="GO:0045893">
    <property type="term" value="P:positive regulation of DNA-templated transcription"/>
    <property type="evidence" value="ECO:0000250"/>
    <property type="project" value="UniProtKB"/>
</dbReference>
<dbReference type="GO" id="GO:0051384">
    <property type="term" value="P:response to glucocorticoid"/>
    <property type="evidence" value="ECO:0000250"/>
    <property type="project" value="UniProtKB"/>
</dbReference>
<dbReference type="GO" id="GO:0002237">
    <property type="term" value="P:response to molecule of bacterial origin"/>
    <property type="evidence" value="ECO:0000250"/>
    <property type="project" value="UniProtKB"/>
</dbReference>
<dbReference type="FunFam" id="1.20.1250.10:FF:000011">
    <property type="entry name" value="Interleukin-10"/>
    <property type="match status" value="1"/>
</dbReference>
<dbReference type="Gene3D" id="1.20.1250.10">
    <property type="match status" value="1"/>
</dbReference>
<dbReference type="InterPro" id="IPR009079">
    <property type="entry name" value="4_helix_cytokine-like_core"/>
</dbReference>
<dbReference type="InterPro" id="IPR000098">
    <property type="entry name" value="IL-10"/>
</dbReference>
<dbReference type="InterPro" id="IPR020443">
    <property type="entry name" value="IL-10/19/20/24/26"/>
</dbReference>
<dbReference type="InterPro" id="IPR020423">
    <property type="entry name" value="IL-10_CS"/>
</dbReference>
<dbReference type="PANTHER" id="PTHR48482:SF5">
    <property type="entry name" value="INTERLEUKIN-10"/>
    <property type="match status" value="1"/>
</dbReference>
<dbReference type="PANTHER" id="PTHR48482">
    <property type="entry name" value="INTERLEUKIN-19-RELATED"/>
    <property type="match status" value="1"/>
</dbReference>
<dbReference type="Pfam" id="PF00726">
    <property type="entry name" value="IL10"/>
    <property type="match status" value="1"/>
</dbReference>
<dbReference type="PRINTS" id="PR01294">
    <property type="entry name" value="INTRLEUKIN10"/>
</dbReference>
<dbReference type="SMART" id="SM00188">
    <property type="entry name" value="IL10"/>
    <property type="match status" value="1"/>
</dbReference>
<dbReference type="SUPFAM" id="SSF47266">
    <property type="entry name" value="4-helical cytokines"/>
    <property type="match status" value="1"/>
</dbReference>
<dbReference type="PROSITE" id="PS00520">
    <property type="entry name" value="INTERLEUKIN_10"/>
    <property type="match status" value="1"/>
</dbReference>
<evidence type="ECO:0000250" key="1"/>
<evidence type="ECO:0000250" key="2">
    <source>
        <dbReference type="UniProtKB" id="P18893"/>
    </source>
</evidence>
<evidence type="ECO:0000250" key="3">
    <source>
        <dbReference type="UniProtKB" id="P22301"/>
    </source>
</evidence>
<evidence type="ECO:0000255" key="4"/>
<evidence type="ECO:0000305" key="5"/>
<name>IL10_MERUN</name>
<comment type="function">
    <text evidence="2 3">Major immune regulatory cytokine that acts on many cells of the immune system where it has profound anti-inflammatory functions, limiting excessive tissue disruption caused by inflammation. Mechanistically, IL10 binds to its heterotetrameric receptor comprising IL10RA and IL10RB leading to JAK1 and STAT2-mediated phosphorylation of STAT3. In turn, STAT3 translocates to the nucleus where it drives expression of anti-inflammatory mediators. Targets antigen-presenting cells (APCs) such as macrophages and monocytes and inhibits their release of pro-inflammatory cytokines including granulocyte-macrophage colony-stimulating factor /GM-CSF, granulocyte colony-stimulating factor/G-CSF, IL-1 alpha, IL-1 beta, IL-6, IL-8 and TNF-alpha. Also interferes with antigen presentation by reducing the expression of MHC-class II and co-stimulatory molecules, thereby inhibiting their ability to induce T cell activation (By similarity). In addition, controls the inflammatory response of macrophages by reprogramming essential metabolic pathways including mTOR signaling (By similarity).</text>
</comment>
<comment type="subunit">
    <text evidence="3">Homodimer. Interacts with IL10RA and IL10RB.</text>
</comment>
<comment type="subcellular location">
    <subcellularLocation>
        <location evidence="3">Secreted</location>
    </subcellularLocation>
</comment>
<comment type="similarity">
    <text evidence="5">Belongs to the IL-10 family.</text>
</comment>
<organism>
    <name type="scientific">Meriones unguiculatus</name>
    <name type="common">Mongolian jird</name>
    <name type="synonym">Gerbillus unguiculatus</name>
    <dbReference type="NCBI Taxonomy" id="10047"/>
    <lineage>
        <taxon>Eukaryota</taxon>
        <taxon>Metazoa</taxon>
        <taxon>Chordata</taxon>
        <taxon>Craniata</taxon>
        <taxon>Vertebrata</taxon>
        <taxon>Euteleostomi</taxon>
        <taxon>Mammalia</taxon>
        <taxon>Eutheria</taxon>
        <taxon>Euarchontoglires</taxon>
        <taxon>Glires</taxon>
        <taxon>Rodentia</taxon>
        <taxon>Myomorpha</taxon>
        <taxon>Muroidea</taxon>
        <taxon>Muridae</taxon>
        <taxon>Gerbillinae</taxon>
        <taxon>Meriones</taxon>
    </lineage>
</organism>
<sequence>MPSSALLYCLILLAGVRPSRGEYPRNESNCTHFPVSQTHMLRELRAAFSQVKTFFQKKDQLDNILLTDSLQQDFKGYLGCQALSEMIQFYLVEVMPQAENHGPEIKENLNSLGEKLKTLRMQLRRCHRFLPCENKSKAVEQVKNDFNKLQEKGVYKAMNEFDIFINCIEAYMTIKMKS</sequence>
<accession>P47965</accession>
<keyword id="KW-0202">Cytokine</keyword>
<keyword id="KW-1015">Disulfide bond</keyword>
<keyword id="KW-0325">Glycoprotein</keyword>
<keyword id="KW-0964">Secreted</keyword>
<keyword id="KW-0732">Signal</keyword>
<protein>
    <recommendedName>
        <fullName>Interleukin-10</fullName>
        <shortName>IL-10</shortName>
    </recommendedName>
    <alternativeName>
        <fullName>Cytokine synthesis inhibitory factor</fullName>
        <shortName>CSIF</shortName>
    </alternativeName>
</protein>
<reference key="1">
    <citation type="submission" date="1995-05" db="EMBL/GenBank/DDBJ databases">
        <authorList>
            <person name="Mai Z."/>
            <person name="Klei T.R."/>
        </authorList>
    </citation>
    <scope>NUCLEOTIDE SEQUENCE [MRNA]</scope>
    <source>
        <tissue>Spleen</tissue>
    </source>
</reference>
<feature type="signal peptide" evidence="4">
    <location>
        <begin position="1"/>
        <end position="18"/>
    </location>
</feature>
<feature type="chain" id="PRO_0000015366" description="Interleukin-10">
    <location>
        <begin position="19"/>
        <end position="178"/>
    </location>
</feature>
<feature type="glycosylation site" description="N-linked (GlcNAc...) asparagine" evidence="4">
    <location>
        <position position="134"/>
    </location>
</feature>
<feature type="disulfide bond" evidence="1">
    <location>
        <begin position="30"/>
        <end position="126"/>
    </location>
</feature>
<feature type="disulfide bond" evidence="1">
    <location>
        <begin position="80"/>
        <end position="132"/>
    </location>
</feature>
<gene>
    <name type="primary">IL10</name>
</gene>